<dbReference type="EMBL" id="CP000503">
    <property type="protein sequence ID" value="ABM23031.1"/>
    <property type="molecule type" value="Genomic_DNA"/>
</dbReference>
<dbReference type="RefSeq" id="WP_011787581.1">
    <property type="nucleotide sequence ID" value="NC_008750.1"/>
</dbReference>
<dbReference type="SMR" id="A1RED6"/>
<dbReference type="GeneID" id="67441782"/>
<dbReference type="KEGG" id="shw:Sputw3181_0178"/>
<dbReference type="HOGENOM" id="CLU_103849_1_2_6"/>
<dbReference type="Proteomes" id="UP000002597">
    <property type="component" value="Chromosome"/>
</dbReference>
<dbReference type="GO" id="GO:0005829">
    <property type="term" value="C:cytosol"/>
    <property type="evidence" value="ECO:0007669"/>
    <property type="project" value="TreeGrafter"/>
</dbReference>
<dbReference type="GO" id="GO:0015935">
    <property type="term" value="C:small ribosomal subunit"/>
    <property type="evidence" value="ECO:0007669"/>
    <property type="project" value="TreeGrafter"/>
</dbReference>
<dbReference type="GO" id="GO:0019843">
    <property type="term" value="F:rRNA binding"/>
    <property type="evidence" value="ECO:0007669"/>
    <property type="project" value="UniProtKB-UniRule"/>
</dbReference>
<dbReference type="GO" id="GO:0003735">
    <property type="term" value="F:structural constituent of ribosome"/>
    <property type="evidence" value="ECO:0007669"/>
    <property type="project" value="InterPro"/>
</dbReference>
<dbReference type="GO" id="GO:0000049">
    <property type="term" value="F:tRNA binding"/>
    <property type="evidence" value="ECO:0007669"/>
    <property type="project" value="UniProtKB-UniRule"/>
</dbReference>
<dbReference type="GO" id="GO:0006412">
    <property type="term" value="P:translation"/>
    <property type="evidence" value="ECO:0007669"/>
    <property type="project" value="UniProtKB-UniRule"/>
</dbReference>
<dbReference type="FunFam" id="1.10.8.50:FF:000001">
    <property type="entry name" value="30S ribosomal protein S13"/>
    <property type="match status" value="1"/>
</dbReference>
<dbReference type="FunFam" id="4.10.910.10:FF:000001">
    <property type="entry name" value="30S ribosomal protein S13"/>
    <property type="match status" value="1"/>
</dbReference>
<dbReference type="Gene3D" id="1.10.8.50">
    <property type="match status" value="1"/>
</dbReference>
<dbReference type="Gene3D" id="4.10.910.10">
    <property type="entry name" value="30s ribosomal protein s13, domain 2"/>
    <property type="match status" value="1"/>
</dbReference>
<dbReference type="HAMAP" id="MF_01315">
    <property type="entry name" value="Ribosomal_uS13"/>
    <property type="match status" value="1"/>
</dbReference>
<dbReference type="InterPro" id="IPR027437">
    <property type="entry name" value="Rbsml_uS13_C"/>
</dbReference>
<dbReference type="InterPro" id="IPR001892">
    <property type="entry name" value="Ribosomal_uS13"/>
</dbReference>
<dbReference type="InterPro" id="IPR010979">
    <property type="entry name" value="Ribosomal_uS13-like_H2TH"/>
</dbReference>
<dbReference type="InterPro" id="IPR019980">
    <property type="entry name" value="Ribosomal_uS13_bac-type"/>
</dbReference>
<dbReference type="InterPro" id="IPR018269">
    <property type="entry name" value="Ribosomal_uS13_CS"/>
</dbReference>
<dbReference type="NCBIfam" id="TIGR03631">
    <property type="entry name" value="uS13_bact"/>
    <property type="match status" value="1"/>
</dbReference>
<dbReference type="PANTHER" id="PTHR10871">
    <property type="entry name" value="30S RIBOSOMAL PROTEIN S13/40S RIBOSOMAL PROTEIN S18"/>
    <property type="match status" value="1"/>
</dbReference>
<dbReference type="PANTHER" id="PTHR10871:SF1">
    <property type="entry name" value="SMALL RIBOSOMAL SUBUNIT PROTEIN US13M"/>
    <property type="match status" value="1"/>
</dbReference>
<dbReference type="Pfam" id="PF00416">
    <property type="entry name" value="Ribosomal_S13"/>
    <property type="match status" value="1"/>
</dbReference>
<dbReference type="PIRSF" id="PIRSF002134">
    <property type="entry name" value="Ribosomal_S13"/>
    <property type="match status" value="1"/>
</dbReference>
<dbReference type="SUPFAM" id="SSF46946">
    <property type="entry name" value="S13-like H2TH domain"/>
    <property type="match status" value="1"/>
</dbReference>
<dbReference type="PROSITE" id="PS00646">
    <property type="entry name" value="RIBOSOMAL_S13_1"/>
    <property type="match status" value="1"/>
</dbReference>
<dbReference type="PROSITE" id="PS50159">
    <property type="entry name" value="RIBOSOMAL_S13_2"/>
    <property type="match status" value="1"/>
</dbReference>
<comment type="function">
    <text evidence="1">Located at the top of the head of the 30S subunit, it contacts several helices of the 16S rRNA. In the 70S ribosome it contacts the 23S rRNA (bridge B1a) and protein L5 of the 50S subunit (bridge B1b), connecting the 2 subunits; these bridges are implicated in subunit movement. Contacts the tRNAs in the A and P-sites.</text>
</comment>
<comment type="subunit">
    <text evidence="1">Part of the 30S ribosomal subunit. Forms a loose heterodimer with protein S19. Forms two bridges to the 50S subunit in the 70S ribosome.</text>
</comment>
<comment type="similarity">
    <text evidence="1">Belongs to the universal ribosomal protein uS13 family.</text>
</comment>
<keyword id="KW-0687">Ribonucleoprotein</keyword>
<keyword id="KW-0689">Ribosomal protein</keyword>
<keyword id="KW-0694">RNA-binding</keyword>
<keyword id="KW-0699">rRNA-binding</keyword>
<keyword id="KW-0820">tRNA-binding</keyword>
<accession>A1RED6</accession>
<proteinExistence type="inferred from homology"/>
<feature type="chain" id="PRO_0000306709" description="Small ribosomal subunit protein uS13">
    <location>
        <begin position="1"/>
        <end position="118"/>
    </location>
</feature>
<feature type="region of interest" description="Disordered" evidence="2">
    <location>
        <begin position="94"/>
        <end position="118"/>
    </location>
</feature>
<gene>
    <name evidence="1" type="primary">rpsM</name>
    <name type="ordered locus">Sputw3181_0178</name>
</gene>
<name>RS13_SHESW</name>
<organism>
    <name type="scientific">Shewanella sp. (strain W3-18-1)</name>
    <dbReference type="NCBI Taxonomy" id="351745"/>
    <lineage>
        <taxon>Bacteria</taxon>
        <taxon>Pseudomonadati</taxon>
        <taxon>Pseudomonadota</taxon>
        <taxon>Gammaproteobacteria</taxon>
        <taxon>Alteromonadales</taxon>
        <taxon>Shewanellaceae</taxon>
        <taxon>Shewanella</taxon>
    </lineage>
</organism>
<protein>
    <recommendedName>
        <fullName evidence="1">Small ribosomal subunit protein uS13</fullName>
    </recommendedName>
    <alternativeName>
        <fullName evidence="3">30S ribosomal protein S13</fullName>
    </alternativeName>
</protein>
<reference key="1">
    <citation type="submission" date="2006-12" db="EMBL/GenBank/DDBJ databases">
        <title>Complete sequence of Shewanella sp. W3-18-1.</title>
        <authorList>
            <consortium name="US DOE Joint Genome Institute"/>
            <person name="Copeland A."/>
            <person name="Lucas S."/>
            <person name="Lapidus A."/>
            <person name="Barry K."/>
            <person name="Detter J.C."/>
            <person name="Glavina del Rio T."/>
            <person name="Hammon N."/>
            <person name="Israni S."/>
            <person name="Dalin E."/>
            <person name="Tice H."/>
            <person name="Pitluck S."/>
            <person name="Chain P."/>
            <person name="Malfatti S."/>
            <person name="Shin M."/>
            <person name="Vergez L."/>
            <person name="Schmutz J."/>
            <person name="Larimer F."/>
            <person name="Land M."/>
            <person name="Hauser L."/>
            <person name="Kyrpides N."/>
            <person name="Lykidis A."/>
            <person name="Tiedje J."/>
            <person name="Richardson P."/>
        </authorList>
    </citation>
    <scope>NUCLEOTIDE SEQUENCE [LARGE SCALE GENOMIC DNA]</scope>
    <source>
        <strain>W3-18-1</strain>
    </source>
</reference>
<evidence type="ECO:0000255" key="1">
    <source>
        <dbReference type="HAMAP-Rule" id="MF_01315"/>
    </source>
</evidence>
<evidence type="ECO:0000256" key="2">
    <source>
        <dbReference type="SAM" id="MobiDB-lite"/>
    </source>
</evidence>
<evidence type="ECO:0000305" key="3"/>
<sequence length="118" mass="13333">MARIAGINIPDQKHTVIALTAIFGIGRTRARAICAATAIAETAKIKELSEAQIDTLREEVAKYLVEGDLRREISMNIKRLMDLGCYRGLRHRRSLPLRGQRTKTNARTRKGPRKPIRK</sequence>